<gene>
    <name evidence="1" type="primary">rpsB</name>
    <name evidence="1" type="synonym">rps2</name>
    <name type="ordered locus">SynWH7803_1329</name>
</gene>
<proteinExistence type="inferred from homology"/>
<protein>
    <recommendedName>
        <fullName evidence="1">Small ribosomal subunit protein uS2</fullName>
    </recommendedName>
    <alternativeName>
        <fullName evidence="2">30S ribosomal protein S2</fullName>
    </alternativeName>
</protein>
<dbReference type="EMBL" id="CT971583">
    <property type="protein sequence ID" value="CAK23755.1"/>
    <property type="molecule type" value="Genomic_DNA"/>
</dbReference>
<dbReference type="SMR" id="A5GLE0"/>
<dbReference type="STRING" id="32051.SynWH7803_1329"/>
<dbReference type="KEGG" id="syx:SynWH7803_1329"/>
<dbReference type="eggNOG" id="COG0052">
    <property type="taxonomic scope" value="Bacteria"/>
</dbReference>
<dbReference type="HOGENOM" id="CLU_040318_1_2_3"/>
<dbReference type="OrthoDB" id="9808036at2"/>
<dbReference type="Proteomes" id="UP000001566">
    <property type="component" value="Chromosome"/>
</dbReference>
<dbReference type="GO" id="GO:0022627">
    <property type="term" value="C:cytosolic small ribosomal subunit"/>
    <property type="evidence" value="ECO:0007669"/>
    <property type="project" value="TreeGrafter"/>
</dbReference>
<dbReference type="GO" id="GO:0003735">
    <property type="term" value="F:structural constituent of ribosome"/>
    <property type="evidence" value="ECO:0007669"/>
    <property type="project" value="InterPro"/>
</dbReference>
<dbReference type="GO" id="GO:0006412">
    <property type="term" value="P:translation"/>
    <property type="evidence" value="ECO:0007669"/>
    <property type="project" value="UniProtKB-UniRule"/>
</dbReference>
<dbReference type="CDD" id="cd01425">
    <property type="entry name" value="RPS2"/>
    <property type="match status" value="1"/>
</dbReference>
<dbReference type="FunFam" id="1.10.287.610:FF:000001">
    <property type="entry name" value="30S ribosomal protein S2"/>
    <property type="match status" value="1"/>
</dbReference>
<dbReference type="Gene3D" id="3.40.50.10490">
    <property type="entry name" value="Glucose-6-phosphate isomerase like protein, domain 1"/>
    <property type="match status" value="1"/>
</dbReference>
<dbReference type="Gene3D" id="1.10.287.610">
    <property type="entry name" value="Helix hairpin bin"/>
    <property type="match status" value="1"/>
</dbReference>
<dbReference type="HAMAP" id="MF_00291_B">
    <property type="entry name" value="Ribosomal_uS2_B"/>
    <property type="match status" value="1"/>
</dbReference>
<dbReference type="InterPro" id="IPR001865">
    <property type="entry name" value="Ribosomal_uS2"/>
</dbReference>
<dbReference type="InterPro" id="IPR005706">
    <property type="entry name" value="Ribosomal_uS2_bac/mit/plastid"/>
</dbReference>
<dbReference type="InterPro" id="IPR018130">
    <property type="entry name" value="Ribosomal_uS2_CS"/>
</dbReference>
<dbReference type="InterPro" id="IPR023591">
    <property type="entry name" value="Ribosomal_uS2_flav_dom_sf"/>
</dbReference>
<dbReference type="NCBIfam" id="TIGR01011">
    <property type="entry name" value="rpsB_bact"/>
    <property type="match status" value="1"/>
</dbReference>
<dbReference type="PANTHER" id="PTHR12534">
    <property type="entry name" value="30S RIBOSOMAL PROTEIN S2 PROKARYOTIC AND ORGANELLAR"/>
    <property type="match status" value="1"/>
</dbReference>
<dbReference type="PANTHER" id="PTHR12534:SF0">
    <property type="entry name" value="SMALL RIBOSOMAL SUBUNIT PROTEIN US2M"/>
    <property type="match status" value="1"/>
</dbReference>
<dbReference type="Pfam" id="PF00318">
    <property type="entry name" value="Ribosomal_S2"/>
    <property type="match status" value="1"/>
</dbReference>
<dbReference type="PRINTS" id="PR00395">
    <property type="entry name" value="RIBOSOMALS2"/>
</dbReference>
<dbReference type="SUPFAM" id="SSF52313">
    <property type="entry name" value="Ribosomal protein S2"/>
    <property type="match status" value="1"/>
</dbReference>
<dbReference type="PROSITE" id="PS00962">
    <property type="entry name" value="RIBOSOMAL_S2_1"/>
    <property type="match status" value="1"/>
</dbReference>
<keyword id="KW-1185">Reference proteome</keyword>
<keyword id="KW-0687">Ribonucleoprotein</keyword>
<keyword id="KW-0689">Ribosomal protein</keyword>
<feature type="chain" id="PRO_1000004103" description="Small ribosomal subunit protein uS2">
    <location>
        <begin position="1"/>
        <end position="239"/>
    </location>
</feature>
<comment type="similarity">
    <text evidence="1">Belongs to the universal ribosomal protein uS2 family.</text>
</comment>
<reference key="1">
    <citation type="submission" date="2006-05" db="EMBL/GenBank/DDBJ databases">
        <authorList>
            <consortium name="Genoscope"/>
        </authorList>
    </citation>
    <scope>NUCLEOTIDE SEQUENCE [LARGE SCALE GENOMIC DNA]</scope>
    <source>
        <strain>WH7803</strain>
    </source>
</reference>
<sequence length="239" mass="26800">MAVVTLAEMMEAGAHFGHQTRRWNPKMSRYIYCARNGVHIIDLVQTAVCMNNAYKWVRSAARSGKRFLFVGTKKQASEVVAQEALRCGGSYVNQRWLGGMLTNWTTMKARIDRLKDLERMEASGAIAMRPKKEGAVLRRELDRLQKYLGGLKNMRRLPDVVVLVDQRRETNAVLEARKLDIPLVSMLDTNCDPDLCEVPIPCNDDAVRSVQLVLSRLADAINEGRHGSNEQRGGDGSEG</sequence>
<evidence type="ECO:0000255" key="1">
    <source>
        <dbReference type="HAMAP-Rule" id="MF_00291"/>
    </source>
</evidence>
<evidence type="ECO:0000305" key="2"/>
<accession>A5GLE0</accession>
<name>RS2_SYNPW</name>
<organism>
    <name type="scientific">Synechococcus sp. (strain WH7803)</name>
    <dbReference type="NCBI Taxonomy" id="32051"/>
    <lineage>
        <taxon>Bacteria</taxon>
        <taxon>Bacillati</taxon>
        <taxon>Cyanobacteriota</taxon>
        <taxon>Cyanophyceae</taxon>
        <taxon>Synechococcales</taxon>
        <taxon>Synechococcaceae</taxon>
        <taxon>Synechococcus</taxon>
    </lineage>
</organism>